<gene>
    <name evidence="1" type="primary">rplP</name>
    <name evidence="1" type="synonym">rpl16</name>
    <name type="ordered locus">Tery_3005</name>
</gene>
<feature type="chain" id="PRO_1000054728" description="Large ribosomal subunit protein uL16">
    <location>
        <begin position="1"/>
        <end position="137"/>
    </location>
</feature>
<feature type="region of interest" description="Disordered" evidence="2">
    <location>
        <begin position="1"/>
        <end position="24"/>
    </location>
</feature>
<feature type="compositionally biased region" description="Basic residues" evidence="2">
    <location>
        <begin position="1"/>
        <end position="17"/>
    </location>
</feature>
<protein>
    <recommendedName>
        <fullName evidence="1">Large ribosomal subunit protein uL16</fullName>
    </recommendedName>
    <alternativeName>
        <fullName evidence="3">50S ribosomal protein L16</fullName>
    </alternativeName>
</protein>
<evidence type="ECO:0000255" key="1">
    <source>
        <dbReference type="HAMAP-Rule" id="MF_01342"/>
    </source>
</evidence>
<evidence type="ECO:0000256" key="2">
    <source>
        <dbReference type="SAM" id="MobiDB-lite"/>
    </source>
</evidence>
<evidence type="ECO:0000305" key="3"/>
<accession>Q110B4</accession>
<organism>
    <name type="scientific">Trichodesmium erythraeum (strain IMS101)</name>
    <dbReference type="NCBI Taxonomy" id="203124"/>
    <lineage>
        <taxon>Bacteria</taxon>
        <taxon>Bacillati</taxon>
        <taxon>Cyanobacteriota</taxon>
        <taxon>Cyanophyceae</taxon>
        <taxon>Oscillatoriophycideae</taxon>
        <taxon>Oscillatoriales</taxon>
        <taxon>Microcoleaceae</taxon>
        <taxon>Trichodesmium</taxon>
    </lineage>
</organism>
<name>RL16_TRIEI</name>
<dbReference type="EMBL" id="CP000393">
    <property type="protein sequence ID" value="ABG52160.1"/>
    <property type="molecule type" value="Genomic_DNA"/>
</dbReference>
<dbReference type="RefSeq" id="WP_011612515.1">
    <property type="nucleotide sequence ID" value="NC_008312.1"/>
</dbReference>
<dbReference type="SMR" id="Q110B4"/>
<dbReference type="STRING" id="203124.Tery_3005"/>
<dbReference type="KEGG" id="ter:Tery_3005"/>
<dbReference type="eggNOG" id="COG0197">
    <property type="taxonomic scope" value="Bacteria"/>
</dbReference>
<dbReference type="HOGENOM" id="CLU_078858_2_1_3"/>
<dbReference type="OrthoDB" id="9802589at2"/>
<dbReference type="GO" id="GO:0022625">
    <property type="term" value="C:cytosolic large ribosomal subunit"/>
    <property type="evidence" value="ECO:0007669"/>
    <property type="project" value="TreeGrafter"/>
</dbReference>
<dbReference type="GO" id="GO:0019843">
    <property type="term" value="F:rRNA binding"/>
    <property type="evidence" value="ECO:0007669"/>
    <property type="project" value="UniProtKB-UniRule"/>
</dbReference>
<dbReference type="GO" id="GO:0003735">
    <property type="term" value="F:structural constituent of ribosome"/>
    <property type="evidence" value="ECO:0007669"/>
    <property type="project" value="InterPro"/>
</dbReference>
<dbReference type="GO" id="GO:0000049">
    <property type="term" value="F:tRNA binding"/>
    <property type="evidence" value="ECO:0007669"/>
    <property type="project" value="UniProtKB-KW"/>
</dbReference>
<dbReference type="GO" id="GO:0006412">
    <property type="term" value="P:translation"/>
    <property type="evidence" value="ECO:0007669"/>
    <property type="project" value="UniProtKB-UniRule"/>
</dbReference>
<dbReference type="CDD" id="cd01433">
    <property type="entry name" value="Ribosomal_L16_L10e"/>
    <property type="match status" value="1"/>
</dbReference>
<dbReference type="FunFam" id="3.90.1170.10:FF:000001">
    <property type="entry name" value="50S ribosomal protein L16"/>
    <property type="match status" value="1"/>
</dbReference>
<dbReference type="Gene3D" id="3.90.1170.10">
    <property type="entry name" value="Ribosomal protein L10e/L16"/>
    <property type="match status" value="1"/>
</dbReference>
<dbReference type="HAMAP" id="MF_01342">
    <property type="entry name" value="Ribosomal_uL16"/>
    <property type="match status" value="1"/>
</dbReference>
<dbReference type="InterPro" id="IPR047873">
    <property type="entry name" value="Ribosomal_uL16"/>
</dbReference>
<dbReference type="InterPro" id="IPR000114">
    <property type="entry name" value="Ribosomal_uL16_bact-type"/>
</dbReference>
<dbReference type="InterPro" id="IPR020798">
    <property type="entry name" value="Ribosomal_uL16_CS"/>
</dbReference>
<dbReference type="InterPro" id="IPR016180">
    <property type="entry name" value="Ribosomal_uL16_dom"/>
</dbReference>
<dbReference type="InterPro" id="IPR036920">
    <property type="entry name" value="Ribosomal_uL16_sf"/>
</dbReference>
<dbReference type="NCBIfam" id="TIGR01164">
    <property type="entry name" value="rplP_bact"/>
    <property type="match status" value="1"/>
</dbReference>
<dbReference type="PANTHER" id="PTHR12220">
    <property type="entry name" value="50S/60S RIBOSOMAL PROTEIN L16"/>
    <property type="match status" value="1"/>
</dbReference>
<dbReference type="PANTHER" id="PTHR12220:SF13">
    <property type="entry name" value="LARGE RIBOSOMAL SUBUNIT PROTEIN UL16M"/>
    <property type="match status" value="1"/>
</dbReference>
<dbReference type="Pfam" id="PF00252">
    <property type="entry name" value="Ribosomal_L16"/>
    <property type="match status" value="1"/>
</dbReference>
<dbReference type="PRINTS" id="PR00060">
    <property type="entry name" value="RIBOSOMALL16"/>
</dbReference>
<dbReference type="SUPFAM" id="SSF54686">
    <property type="entry name" value="Ribosomal protein L16p/L10e"/>
    <property type="match status" value="1"/>
</dbReference>
<dbReference type="PROSITE" id="PS00586">
    <property type="entry name" value="RIBOSOMAL_L16_1"/>
    <property type="match status" value="1"/>
</dbReference>
<dbReference type="PROSITE" id="PS00701">
    <property type="entry name" value="RIBOSOMAL_L16_2"/>
    <property type="match status" value="1"/>
</dbReference>
<keyword id="KW-0687">Ribonucleoprotein</keyword>
<keyword id="KW-0689">Ribosomal protein</keyword>
<keyword id="KW-0694">RNA-binding</keyword>
<keyword id="KW-0699">rRNA-binding</keyword>
<keyword id="KW-0820">tRNA-binding</keyword>
<comment type="function">
    <text evidence="1">Binds 23S rRNA and is also seen to make contacts with the A and possibly P site tRNAs.</text>
</comment>
<comment type="subunit">
    <text evidence="1">Part of the 50S ribosomal subunit.</text>
</comment>
<comment type="similarity">
    <text evidence="1">Belongs to the universal ribosomal protein uL16 family.</text>
</comment>
<proteinExistence type="inferred from homology"/>
<reference key="1">
    <citation type="journal article" date="2015" name="Proc. Natl. Acad. Sci. U.S.A.">
        <title>Trichodesmium genome maintains abundant, widespread noncoding DNA in situ, despite oligotrophic lifestyle.</title>
        <authorList>
            <person name="Walworth N."/>
            <person name="Pfreundt U."/>
            <person name="Nelson W.C."/>
            <person name="Mincer T."/>
            <person name="Heidelberg J.F."/>
            <person name="Fu F."/>
            <person name="Waterbury J.B."/>
            <person name="Glavina del Rio T."/>
            <person name="Goodwin L."/>
            <person name="Kyrpides N.C."/>
            <person name="Land M.L."/>
            <person name="Woyke T."/>
            <person name="Hutchins D.A."/>
            <person name="Hess W.R."/>
            <person name="Webb E.A."/>
        </authorList>
    </citation>
    <scope>NUCLEOTIDE SEQUENCE [LARGE SCALE GENOMIC DNA]</scope>
    <source>
        <strain>IMS101</strain>
    </source>
</reference>
<sequence>MLSPKRTKFRKQQRGRMRGNANSGNKISFGQYALQALEPSWITSRQIEAARRAMTRYIRRGGKIWIRVFPDKPVTMRAAETRMGSGKGAPEYWVAVVKPGRIMFELGGVVEEIAREAMRLASFKLPIKTRFIVREED</sequence>